<name>RUVC_MYCBP</name>
<gene>
    <name evidence="1" type="primary">ruvC</name>
    <name type="ordered locus">BCG_2617c</name>
</gene>
<accession>A1KLU2</accession>
<keyword id="KW-0963">Cytoplasm</keyword>
<keyword id="KW-0227">DNA damage</keyword>
<keyword id="KW-0233">DNA recombination</keyword>
<keyword id="KW-0234">DNA repair</keyword>
<keyword id="KW-0238">DNA-binding</keyword>
<keyword id="KW-0255">Endonuclease</keyword>
<keyword id="KW-0378">Hydrolase</keyword>
<keyword id="KW-0460">Magnesium</keyword>
<keyword id="KW-0479">Metal-binding</keyword>
<keyword id="KW-0540">Nuclease</keyword>
<sequence>MRVMGVDPGLTRCGLSLIESGRGRQLTALDVDVVRTPSDAALAQRLLAISDAVEHWLDTHHPEVVAIERVFSQLNVTTVMGTAQAGGVIALAAAKRGVDVHFHTPSEVKAAVTGNGSADKAQVTAMVTKILALQAKPTPADAADALALAICHCWRAPTIARMAEATSRAEARAAQQRHAYLAKLKAAR</sequence>
<proteinExistence type="inferred from homology"/>
<comment type="function">
    <text evidence="1">The RuvA-RuvB-RuvC complex processes Holliday junction (HJ) DNA during genetic recombination and DNA repair. Endonuclease that resolves HJ intermediates. Cleaves cruciform DNA by making single-stranded nicks across the HJ at symmetrical positions within the homologous arms, yielding a 5'-phosphate and a 3'-hydroxyl group; requires a central core of homology in the junction. The consensus cleavage sequence is 5'-(A/T)TT(C/G)-3'. Cleavage occurs on the 3'-side of the TT dinucleotide at the point of strand exchange. HJ branch migration catalyzed by RuvA-RuvB allows RuvC to scan DNA until it finds its consensus sequence, where it cleaves and resolves the cruciform DNA.</text>
</comment>
<comment type="catalytic activity">
    <reaction evidence="1">
        <text>Endonucleolytic cleavage at a junction such as a reciprocal single-stranded crossover between two homologous DNA duplexes (Holliday junction).</text>
        <dbReference type="EC" id="3.1.21.10"/>
    </reaction>
</comment>
<comment type="cofactor">
    <cofactor evidence="1">
        <name>Mg(2+)</name>
        <dbReference type="ChEBI" id="CHEBI:18420"/>
    </cofactor>
    <text evidence="1">Binds 2 Mg(2+) ion per subunit.</text>
</comment>
<comment type="subunit">
    <text evidence="1">Homodimer which binds Holliday junction (HJ) DNA. The HJ becomes 2-fold symmetrical on binding to RuvC with unstacked arms; it has a different conformation from HJ DNA in complex with RuvA. In the full resolvosome a probable DNA-RuvA(4)-RuvB(12)-RuvC(2) complex forms which resolves the HJ.</text>
</comment>
<comment type="subcellular location">
    <subcellularLocation>
        <location evidence="1">Cytoplasm</location>
    </subcellularLocation>
</comment>
<comment type="similarity">
    <text evidence="1">Belongs to the RuvC family.</text>
</comment>
<organism>
    <name type="scientific">Mycobacterium bovis (strain BCG / Pasteur 1173P2)</name>
    <dbReference type="NCBI Taxonomy" id="410289"/>
    <lineage>
        <taxon>Bacteria</taxon>
        <taxon>Bacillati</taxon>
        <taxon>Actinomycetota</taxon>
        <taxon>Actinomycetes</taxon>
        <taxon>Mycobacteriales</taxon>
        <taxon>Mycobacteriaceae</taxon>
        <taxon>Mycobacterium</taxon>
        <taxon>Mycobacterium tuberculosis complex</taxon>
    </lineage>
</organism>
<evidence type="ECO:0000255" key="1">
    <source>
        <dbReference type="HAMAP-Rule" id="MF_00034"/>
    </source>
</evidence>
<protein>
    <recommendedName>
        <fullName evidence="1">Crossover junction endodeoxyribonuclease RuvC</fullName>
        <ecNumber evidence="1">3.1.21.10</ecNumber>
    </recommendedName>
    <alternativeName>
        <fullName evidence="1">Holliday junction nuclease RuvC</fullName>
    </alternativeName>
    <alternativeName>
        <fullName evidence="1">Holliday junction resolvase RuvC</fullName>
    </alternativeName>
</protein>
<reference key="1">
    <citation type="journal article" date="2007" name="Proc. Natl. Acad. Sci. U.S.A.">
        <title>Genome plasticity of BCG and impact on vaccine efficacy.</title>
        <authorList>
            <person name="Brosch R."/>
            <person name="Gordon S.V."/>
            <person name="Garnier T."/>
            <person name="Eiglmeier K."/>
            <person name="Frigui W."/>
            <person name="Valenti P."/>
            <person name="Dos Santos S."/>
            <person name="Duthoy S."/>
            <person name="Lacroix C."/>
            <person name="Garcia-Pelayo C."/>
            <person name="Inwald J.K."/>
            <person name="Golby P."/>
            <person name="Garcia J.N."/>
            <person name="Hewinson R.G."/>
            <person name="Behr M.A."/>
            <person name="Quail M.A."/>
            <person name="Churcher C."/>
            <person name="Barrell B.G."/>
            <person name="Parkhill J."/>
            <person name="Cole S.T."/>
        </authorList>
    </citation>
    <scope>NUCLEOTIDE SEQUENCE [LARGE SCALE GENOMIC DNA]</scope>
    <source>
        <strain>BCG / Pasteur 1173P2</strain>
    </source>
</reference>
<dbReference type="EC" id="3.1.21.10" evidence="1"/>
<dbReference type="EMBL" id="AM408590">
    <property type="protein sequence ID" value="CAL72605.1"/>
    <property type="molecule type" value="Genomic_DNA"/>
</dbReference>
<dbReference type="RefSeq" id="WP_003413426.1">
    <property type="nucleotide sequence ID" value="NC_008769.1"/>
</dbReference>
<dbReference type="SMR" id="A1KLU2"/>
<dbReference type="GeneID" id="45426596"/>
<dbReference type="KEGG" id="mbb:BCG_2617c"/>
<dbReference type="HOGENOM" id="CLU_091257_0_2_11"/>
<dbReference type="Proteomes" id="UP000001472">
    <property type="component" value="Chromosome"/>
</dbReference>
<dbReference type="GO" id="GO:0005737">
    <property type="term" value="C:cytoplasm"/>
    <property type="evidence" value="ECO:0007669"/>
    <property type="project" value="UniProtKB-SubCell"/>
</dbReference>
<dbReference type="GO" id="GO:0048476">
    <property type="term" value="C:Holliday junction resolvase complex"/>
    <property type="evidence" value="ECO:0007669"/>
    <property type="project" value="UniProtKB-UniRule"/>
</dbReference>
<dbReference type="GO" id="GO:0008821">
    <property type="term" value="F:crossover junction DNA endonuclease activity"/>
    <property type="evidence" value="ECO:0007669"/>
    <property type="project" value="UniProtKB-UniRule"/>
</dbReference>
<dbReference type="GO" id="GO:0003677">
    <property type="term" value="F:DNA binding"/>
    <property type="evidence" value="ECO:0007669"/>
    <property type="project" value="UniProtKB-KW"/>
</dbReference>
<dbReference type="GO" id="GO:0000287">
    <property type="term" value="F:magnesium ion binding"/>
    <property type="evidence" value="ECO:0007669"/>
    <property type="project" value="UniProtKB-UniRule"/>
</dbReference>
<dbReference type="GO" id="GO:0006310">
    <property type="term" value="P:DNA recombination"/>
    <property type="evidence" value="ECO:0007669"/>
    <property type="project" value="UniProtKB-UniRule"/>
</dbReference>
<dbReference type="GO" id="GO:0006281">
    <property type="term" value="P:DNA repair"/>
    <property type="evidence" value="ECO:0007669"/>
    <property type="project" value="UniProtKB-UniRule"/>
</dbReference>
<dbReference type="CDD" id="cd16962">
    <property type="entry name" value="RuvC"/>
    <property type="match status" value="1"/>
</dbReference>
<dbReference type="FunFam" id="3.30.420.10:FF:000002">
    <property type="entry name" value="Crossover junction endodeoxyribonuclease RuvC"/>
    <property type="match status" value="1"/>
</dbReference>
<dbReference type="Gene3D" id="3.30.420.10">
    <property type="entry name" value="Ribonuclease H-like superfamily/Ribonuclease H"/>
    <property type="match status" value="1"/>
</dbReference>
<dbReference type="HAMAP" id="MF_00034">
    <property type="entry name" value="RuvC"/>
    <property type="match status" value="1"/>
</dbReference>
<dbReference type="InterPro" id="IPR012337">
    <property type="entry name" value="RNaseH-like_sf"/>
</dbReference>
<dbReference type="InterPro" id="IPR036397">
    <property type="entry name" value="RNaseH_sf"/>
</dbReference>
<dbReference type="InterPro" id="IPR020563">
    <property type="entry name" value="X-over_junc_endoDNase_Mg_BS"/>
</dbReference>
<dbReference type="InterPro" id="IPR002176">
    <property type="entry name" value="X-over_junc_endoDNase_RuvC"/>
</dbReference>
<dbReference type="NCBIfam" id="TIGR00228">
    <property type="entry name" value="ruvC"/>
    <property type="match status" value="1"/>
</dbReference>
<dbReference type="PANTHER" id="PTHR30194">
    <property type="entry name" value="CROSSOVER JUNCTION ENDODEOXYRIBONUCLEASE RUVC"/>
    <property type="match status" value="1"/>
</dbReference>
<dbReference type="PANTHER" id="PTHR30194:SF3">
    <property type="entry name" value="CROSSOVER JUNCTION ENDODEOXYRIBONUCLEASE RUVC"/>
    <property type="match status" value="1"/>
</dbReference>
<dbReference type="Pfam" id="PF02075">
    <property type="entry name" value="RuvC"/>
    <property type="match status" value="1"/>
</dbReference>
<dbReference type="PRINTS" id="PR00696">
    <property type="entry name" value="RSOLVASERUVC"/>
</dbReference>
<dbReference type="SUPFAM" id="SSF53098">
    <property type="entry name" value="Ribonuclease H-like"/>
    <property type="match status" value="1"/>
</dbReference>
<dbReference type="PROSITE" id="PS01321">
    <property type="entry name" value="RUVC"/>
    <property type="match status" value="1"/>
</dbReference>
<feature type="chain" id="PRO_1000002778" description="Crossover junction endodeoxyribonuclease RuvC">
    <location>
        <begin position="1"/>
        <end position="188"/>
    </location>
</feature>
<feature type="active site" evidence="1">
    <location>
        <position position="7"/>
    </location>
</feature>
<feature type="active site" evidence="1">
    <location>
        <position position="68"/>
    </location>
</feature>
<feature type="active site" evidence="1">
    <location>
        <position position="141"/>
    </location>
</feature>
<feature type="binding site" evidence="1">
    <location>
        <position position="7"/>
    </location>
    <ligand>
        <name>Mg(2+)</name>
        <dbReference type="ChEBI" id="CHEBI:18420"/>
        <label>1</label>
    </ligand>
</feature>
<feature type="binding site" evidence="1">
    <location>
        <position position="68"/>
    </location>
    <ligand>
        <name>Mg(2+)</name>
        <dbReference type="ChEBI" id="CHEBI:18420"/>
        <label>2</label>
    </ligand>
</feature>
<feature type="binding site" evidence="1">
    <location>
        <position position="141"/>
    </location>
    <ligand>
        <name>Mg(2+)</name>
        <dbReference type="ChEBI" id="CHEBI:18420"/>
        <label>1</label>
    </ligand>
</feature>